<organism>
    <name type="scientific">Escherichia coli (strain UTI89 / UPEC)</name>
    <dbReference type="NCBI Taxonomy" id="364106"/>
    <lineage>
        <taxon>Bacteria</taxon>
        <taxon>Pseudomonadati</taxon>
        <taxon>Pseudomonadota</taxon>
        <taxon>Gammaproteobacteria</taxon>
        <taxon>Enterobacterales</taxon>
        <taxon>Enterobacteriaceae</taxon>
        <taxon>Escherichia</taxon>
    </lineage>
</organism>
<protein>
    <recommendedName>
        <fullName evidence="1">Na(+)/H(+) antiporter NhaB</fullName>
    </recommendedName>
    <alternativeName>
        <fullName evidence="1">Sodium/proton antiporter NhaB</fullName>
    </alternativeName>
</protein>
<dbReference type="EMBL" id="CP000243">
    <property type="protein sequence ID" value="ABE06854.1"/>
    <property type="status" value="ALT_INIT"/>
    <property type="molecule type" value="Genomic_DNA"/>
</dbReference>
<dbReference type="RefSeq" id="WP_000406401.1">
    <property type="nucleotide sequence ID" value="NZ_CP064825.1"/>
</dbReference>
<dbReference type="SMR" id="Q1RCR0"/>
<dbReference type="KEGG" id="eci:UTI89_C1372"/>
<dbReference type="HOGENOM" id="CLU_041110_0_0_6"/>
<dbReference type="Proteomes" id="UP000001952">
    <property type="component" value="Chromosome"/>
</dbReference>
<dbReference type="GO" id="GO:0005886">
    <property type="term" value="C:plasma membrane"/>
    <property type="evidence" value="ECO:0007669"/>
    <property type="project" value="UniProtKB-SubCell"/>
</dbReference>
<dbReference type="GO" id="GO:0015385">
    <property type="term" value="F:sodium:proton antiporter activity"/>
    <property type="evidence" value="ECO:0007669"/>
    <property type="project" value="InterPro"/>
</dbReference>
<dbReference type="HAMAP" id="MF_01599">
    <property type="entry name" value="NhaB"/>
    <property type="match status" value="1"/>
</dbReference>
<dbReference type="InterPro" id="IPR004671">
    <property type="entry name" value="Na+/H+_antiporter_NhaB"/>
</dbReference>
<dbReference type="NCBIfam" id="TIGR00774">
    <property type="entry name" value="NhaB"/>
    <property type="match status" value="1"/>
</dbReference>
<dbReference type="NCBIfam" id="NF007093">
    <property type="entry name" value="PRK09547.1"/>
    <property type="match status" value="1"/>
</dbReference>
<dbReference type="PANTHER" id="PTHR43302:SF1">
    <property type="entry name" value="NA(+)_H(+) ANTIPORTER NHAB"/>
    <property type="match status" value="1"/>
</dbReference>
<dbReference type="PANTHER" id="PTHR43302">
    <property type="entry name" value="TRANSPORTER ARSB-RELATED"/>
    <property type="match status" value="1"/>
</dbReference>
<dbReference type="Pfam" id="PF06450">
    <property type="entry name" value="NhaB"/>
    <property type="match status" value="1"/>
</dbReference>
<feature type="chain" id="PRO_0000333089" description="Na(+)/H(+) antiporter NhaB">
    <location>
        <begin position="1"/>
        <end position="513"/>
    </location>
</feature>
<feature type="transmembrane region" description="Helical" evidence="1">
    <location>
        <begin position="23"/>
        <end position="43"/>
    </location>
</feature>
<feature type="transmembrane region" description="Helical" evidence="1">
    <location>
        <begin position="52"/>
        <end position="72"/>
    </location>
</feature>
<feature type="transmembrane region" description="Helical" evidence="1">
    <location>
        <begin position="97"/>
        <end position="117"/>
    </location>
</feature>
<feature type="transmembrane region" description="Helical" evidence="1">
    <location>
        <begin position="120"/>
        <end position="140"/>
    </location>
</feature>
<feature type="transmembrane region" description="Helical" evidence="1">
    <location>
        <begin position="144"/>
        <end position="164"/>
    </location>
</feature>
<feature type="transmembrane region" description="Helical" evidence="1">
    <location>
        <begin position="202"/>
        <end position="222"/>
    </location>
</feature>
<feature type="transmembrane region" description="Helical" evidence="1">
    <location>
        <begin position="238"/>
        <end position="258"/>
    </location>
</feature>
<feature type="transmembrane region" description="Helical" evidence="1">
    <location>
        <begin position="303"/>
        <end position="323"/>
    </location>
</feature>
<feature type="transmembrane region" description="Helical" evidence="1">
    <location>
        <begin position="348"/>
        <end position="368"/>
    </location>
</feature>
<feature type="transmembrane region" description="Helical" evidence="1">
    <location>
        <begin position="391"/>
        <end position="411"/>
    </location>
</feature>
<feature type="transmembrane region" description="Helical" evidence="1">
    <location>
        <begin position="447"/>
        <end position="467"/>
    </location>
</feature>
<feature type="transmembrane region" description="Helical" evidence="1">
    <location>
        <begin position="475"/>
        <end position="495"/>
    </location>
</feature>
<sequence length="513" mass="56703">MEISWGRALWRNFLGQSPDWYKLALIIFLIVNPLIFLISPFVAGWLLVAEFIFTLAMALKCYPLLPGGLLAIEAVFIGMTSAEHVREEVAANLEVLLLLMFMVAGIYFMKQLLLFIFTRLLLSIRSKMLLSLSFCVAAAFLSAFLDALTVVAVVISVAVGFYGIYHRVASSRTEDTDLQDDSHIDKHYKVVLEQFRGFLRSLMMHAGVGTALGGVMTMVGEPQNLIIAKAAGWHFGDFFLRMSPVTVPVLICGLLTCLLVEKLRWFGYGETLPEKVREVLQQFDDQSRLQRTRQDKIRLIVQAIIGVWLVTALALHLAEVGLIGLSVIILATSLTGVTDEHAIGKAFTESLPFTALLTVFFSVVAVIIDQQLFSPIIQFVLQASEHAQLSLFYIFNGLLSSISDNVFVGTIYINEAKAAMKSGAITLKQYELLAVAINTGTNLPSVATPNGQAAFLFLLTSALAPLIRLSYGRMVWMALPYTLVLTLVGLLCVEFTLAPVTEWFMQMGWIATL</sequence>
<keyword id="KW-0050">Antiport</keyword>
<keyword id="KW-0997">Cell inner membrane</keyword>
<keyword id="KW-1003">Cell membrane</keyword>
<keyword id="KW-0406">Ion transport</keyword>
<keyword id="KW-0472">Membrane</keyword>
<keyword id="KW-0915">Sodium</keyword>
<keyword id="KW-0739">Sodium transport</keyword>
<keyword id="KW-0812">Transmembrane</keyword>
<keyword id="KW-1133">Transmembrane helix</keyword>
<keyword id="KW-0813">Transport</keyword>
<reference key="1">
    <citation type="journal article" date="2006" name="Proc. Natl. Acad. Sci. U.S.A.">
        <title>Identification of genes subject to positive selection in uropathogenic strains of Escherichia coli: a comparative genomics approach.</title>
        <authorList>
            <person name="Chen S.L."/>
            <person name="Hung C.-S."/>
            <person name="Xu J."/>
            <person name="Reigstad C.S."/>
            <person name="Magrini V."/>
            <person name="Sabo A."/>
            <person name="Blasiar D."/>
            <person name="Bieri T."/>
            <person name="Meyer R.R."/>
            <person name="Ozersky P."/>
            <person name="Armstrong J.R."/>
            <person name="Fulton R.S."/>
            <person name="Latreille J.P."/>
            <person name="Spieth J."/>
            <person name="Hooton T.M."/>
            <person name="Mardis E.R."/>
            <person name="Hultgren S.J."/>
            <person name="Gordon J.I."/>
        </authorList>
    </citation>
    <scope>NUCLEOTIDE SEQUENCE [LARGE SCALE GENOMIC DNA]</scope>
    <source>
        <strain>UTI89 / UPEC</strain>
    </source>
</reference>
<proteinExistence type="inferred from homology"/>
<comment type="function">
    <text evidence="1">Na(+)/H(+) antiporter that extrudes sodium in exchange for external protons.</text>
</comment>
<comment type="catalytic activity">
    <reaction evidence="1">
        <text>2 Na(+)(in) + 3 H(+)(out) = 2 Na(+)(out) + 3 H(+)(in)</text>
        <dbReference type="Rhea" id="RHEA:29247"/>
        <dbReference type="ChEBI" id="CHEBI:15378"/>
        <dbReference type="ChEBI" id="CHEBI:29101"/>
    </reaction>
    <physiologicalReaction direction="left-to-right" evidence="1">
        <dbReference type="Rhea" id="RHEA:29248"/>
    </physiologicalReaction>
</comment>
<comment type="subcellular location">
    <subcellularLocation>
        <location evidence="1">Cell inner membrane</location>
        <topology evidence="1">Multi-pass membrane protein</topology>
    </subcellularLocation>
</comment>
<comment type="similarity">
    <text evidence="1">Belongs to the NhaB Na(+)/H(+) (TC 2.A.34) antiporter family.</text>
</comment>
<comment type="sequence caution" evidence="2">
    <conflict type="erroneous initiation">
        <sequence resource="EMBL-CDS" id="ABE06854"/>
    </conflict>
</comment>
<name>NHAB_ECOUT</name>
<evidence type="ECO:0000255" key="1">
    <source>
        <dbReference type="HAMAP-Rule" id="MF_01599"/>
    </source>
</evidence>
<evidence type="ECO:0000305" key="2"/>
<gene>
    <name evidence="1" type="primary">nhaB</name>
    <name type="ordered locus">UTI89_C1372</name>
</gene>
<accession>Q1RCR0</accession>